<comment type="function">
    <text evidence="1">Can catalyze the hydrolysis of ATP in the presence of single-stranded DNA, the ATP-dependent uptake of single-stranded DNA by duplex DNA, and the ATP-dependent hybridization of homologous single-stranded DNAs. It interacts with LexA causing its activation and leading to its autocatalytic cleavage.</text>
</comment>
<comment type="subcellular location">
    <subcellularLocation>
        <location evidence="1">Cytoplasm</location>
    </subcellularLocation>
</comment>
<comment type="similarity">
    <text evidence="1">Belongs to the RecA family.</text>
</comment>
<reference key="1">
    <citation type="submission" date="2008-05" db="EMBL/GenBank/DDBJ databases">
        <title>Complete sequence of Chlorobium limicola DSM 245.</title>
        <authorList>
            <consortium name="US DOE Joint Genome Institute"/>
            <person name="Lucas S."/>
            <person name="Copeland A."/>
            <person name="Lapidus A."/>
            <person name="Glavina del Rio T."/>
            <person name="Dalin E."/>
            <person name="Tice H."/>
            <person name="Bruce D."/>
            <person name="Goodwin L."/>
            <person name="Pitluck S."/>
            <person name="Schmutz J."/>
            <person name="Larimer F."/>
            <person name="Land M."/>
            <person name="Hauser L."/>
            <person name="Kyrpides N."/>
            <person name="Ovchinnikova G."/>
            <person name="Zhao F."/>
            <person name="Li T."/>
            <person name="Liu Z."/>
            <person name="Overmann J."/>
            <person name="Bryant D.A."/>
            <person name="Richardson P."/>
        </authorList>
    </citation>
    <scope>NUCLEOTIDE SEQUENCE [LARGE SCALE GENOMIC DNA]</scope>
    <source>
        <strain>DSM 245 / NBRC 103803 / 6330</strain>
    </source>
</reference>
<gene>
    <name evidence="1" type="primary">recA</name>
    <name type="ordered locus">Clim_2133</name>
</gene>
<evidence type="ECO:0000255" key="1">
    <source>
        <dbReference type="HAMAP-Rule" id="MF_00268"/>
    </source>
</evidence>
<proteinExistence type="inferred from homology"/>
<accession>B3EGP4</accession>
<sequence>MNMDTNDKEKKNEGIDPAKLKQLNLAVDALEKQFGKGAIMRLGDGSAVMQVQSISTGSMTLDFALGVGGLPRGRVAEIYGPESSGKTTLALHVIAEAQKEGGIAAIVDAEHAFDPSYARKLGVDINALLISQPESGEQALTIVETLVRSGAVDVVVVDSVAALVPQAELEGEMGDSVVGLQARLMSQALRKLTGAISKSSAVCIFINQLRDKIGVMYGSPETTTGGKALKFYASIRLDIRKIAQIKDGDEIVGNRTKVKVVKNKVAPPFKSAEFDILYGEGISAMGELVDLAVEFGVVKKSGSWFSFGQEKLGQGRESAKKALREDHALFQQVYIQVRELMTGTAEIING</sequence>
<name>RECA_CHLL2</name>
<dbReference type="EMBL" id="CP001097">
    <property type="protein sequence ID" value="ACD91157.1"/>
    <property type="molecule type" value="Genomic_DNA"/>
</dbReference>
<dbReference type="RefSeq" id="WP_012467026.1">
    <property type="nucleotide sequence ID" value="NC_010803.1"/>
</dbReference>
<dbReference type="SMR" id="B3EGP4"/>
<dbReference type="STRING" id="290315.Clim_2133"/>
<dbReference type="KEGG" id="cli:Clim_2133"/>
<dbReference type="eggNOG" id="COG0468">
    <property type="taxonomic scope" value="Bacteria"/>
</dbReference>
<dbReference type="HOGENOM" id="CLU_040469_3_2_10"/>
<dbReference type="Proteomes" id="UP000008841">
    <property type="component" value="Chromosome"/>
</dbReference>
<dbReference type="GO" id="GO:0005829">
    <property type="term" value="C:cytosol"/>
    <property type="evidence" value="ECO:0007669"/>
    <property type="project" value="TreeGrafter"/>
</dbReference>
<dbReference type="GO" id="GO:0005524">
    <property type="term" value="F:ATP binding"/>
    <property type="evidence" value="ECO:0007669"/>
    <property type="project" value="UniProtKB-UniRule"/>
</dbReference>
<dbReference type="GO" id="GO:0016887">
    <property type="term" value="F:ATP hydrolysis activity"/>
    <property type="evidence" value="ECO:0007669"/>
    <property type="project" value="InterPro"/>
</dbReference>
<dbReference type="GO" id="GO:0140664">
    <property type="term" value="F:ATP-dependent DNA damage sensor activity"/>
    <property type="evidence" value="ECO:0007669"/>
    <property type="project" value="InterPro"/>
</dbReference>
<dbReference type="GO" id="GO:0003684">
    <property type="term" value="F:damaged DNA binding"/>
    <property type="evidence" value="ECO:0007669"/>
    <property type="project" value="UniProtKB-UniRule"/>
</dbReference>
<dbReference type="GO" id="GO:0003697">
    <property type="term" value="F:single-stranded DNA binding"/>
    <property type="evidence" value="ECO:0007669"/>
    <property type="project" value="UniProtKB-UniRule"/>
</dbReference>
<dbReference type="GO" id="GO:0006310">
    <property type="term" value="P:DNA recombination"/>
    <property type="evidence" value="ECO:0007669"/>
    <property type="project" value="UniProtKB-UniRule"/>
</dbReference>
<dbReference type="GO" id="GO:0006281">
    <property type="term" value="P:DNA repair"/>
    <property type="evidence" value="ECO:0007669"/>
    <property type="project" value="UniProtKB-UniRule"/>
</dbReference>
<dbReference type="GO" id="GO:0009432">
    <property type="term" value="P:SOS response"/>
    <property type="evidence" value="ECO:0007669"/>
    <property type="project" value="UniProtKB-UniRule"/>
</dbReference>
<dbReference type="CDD" id="cd00983">
    <property type="entry name" value="RecA"/>
    <property type="match status" value="1"/>
</dbReference>
<dbReference type="FunFam" id="3.40.50.300:FF:000087">
    <property type="entry name" value="Recombinase RecA"/>
    <property type="match status" value="1"/>
</dbReference>
<dbReference type="Gene3D" id="3.40.50.300">
    <property type="entry name" value="P-loop containing nucleotide triphosphate hydrolases"/>
    <property type="match status" value="1"/>
</dbReference>
<dbReference type="HAMAP" id="MF_00268">
    <property type="entry name" value="RecA"/>
    <property type="match status" value="1"/>
</dbReference>
<dbReference type="InterPro" id="IPR003593">
    <property type="entry name" value="AAA+_ATPase"/>
</dbReference>
<dbReference type="InterPro" id="IPR013765">
    <property type="entry name" value="DNA_recomb/repair_RecA"/>
</dbReference>
<dbReference type="InterPro" id="IPR020584">
    <property type="entry name" value="DNA_recomb/repair_RecA_CS"/>
</dbReference>
<dbReference type="InterPro" id="IPR027417">
    <property type="entry name" value="P-loop_NTPase"/>
</dbReference>
<dbReference type="InterPro" id="IPR049261">
    <property type="entry name" value="RecA-like_C"/>
</dbReference>
<dbReference type="InterPro" id="IPR049428">
    <property type="entry name" value="RecA-like_N"/>
</dbReference>
<dbReference type="InterPro" id="IPR020588">
    <property type="entry name" value="RecA_ATP-bd"/>
</dbReference>
<dbReference type="InterPro" id="IPR023400">
    <property type="entry name" value="RecA_C_sf"/>
</dbReference>
<dbReference type="InterPro" id="IPR020587">
    <property type="entry name" value="RecA_monomer-monomer_interface"/>
</dbReference>
<dbReference type="NCBIfam" id="TIGR02012">
    <property type="entry name" value="tigrfam_recA"/>
    <property type="match status" value="1"/>
</dbReference>
<dbReference type="PANTHER" id="PTHR45900:SF1">
    <property type="entry name" value="MITOCHONDRIAL DNA REPAIR PROTEIN RECA HOMOLOG-RELATED"/>
    <property type="match status" value="1"/>
</dbReference>
<dbReference type="PANTHER" id="PTHR45900">
    <property type="entry name" value="RECA"/>
    <property type="match status" value="1"/>
</dbReference>
<dbReference type="Pfam" id="PF00154">
    <property type="entry name" value="RecA"/>
    <property type="match status" value="1"/>
</dbReference>
<dbReference type="Pfam" id="PF21096">
    <property type="entry name" value="RecA_C"/>
    <property type="match status" value="1"/>
</dbReference>
<dbReference type="PRINTS" id="PR00142">
    <property type="entry name" value="RECA"/>
</dbReference>
<dbReference type="SMART" id="SM00382">
    <property type="entry name" value="AAA"/>
    <property type="match status" value="1"/>
</dbReference>
<dbReference type="SUPFAM" id="SSF52540">
    <property type="entry name" value="P-loop containing nucleoside triphosphate hydrolases"/>
    <property type="match status" value="1"/>
</dbReference>
<dbReference type="SUPFAM" id="SSF54752">
    <property type="entry name" value="RecA protein, C-terminal domain"/>
    <property type="match status" value="1"/>
</dbReference>
<dbReference type="PROSITE" id="PS00321">
    <property type="entry name" value="RECA_1"/>
    <property type="match status" value="1"/>
</dbReference>
<dbReference type="PROSITE" id="PS50162">
    <property type="entry name" value="RECA_2"/>
    <property type="match status" value="1"/>
</dbReference>
<dbReference type="PROSITE" id="PS50163">
    <property type="entry name" value="RECA_3"/>
    <property type="match status" value="1"/>
</dbReference>
<keyword id="KW-0067">ATP-binding</keyword>
<keyword id="KW-0963">Cytoplasm</keyword>
<keyword id="KW-0227">DNA damage</keyword>
<keyword id="KW-0233">DNA recombination</keyword>
<keyword id="KW-0234">DNA repair</keyword>
<keyword id="KW-0238">DNA-binding</keyword>
<keyword id="KW-0547">Nucleotide-binding</keyword>
<keyword id="KW-0742">SOS response</keyword>
<organism>
    <name type="scientific">Chlorobium limicola (strain DSM 245 / NBRC 103803 / 6330)</name>
    <dbReference type="NCBI Taxonomy" id="290315"/>
    <lineage>
        <taxon>Bacteria</taxon>
        <taxon>Pseudomonadati</taxon>
        <taxon>Chlorobiota</taxon>
        <taxon>Chlorobiia</taxon>
        <taxon>Chlorobiales</taxon>
        <taxon>Chlorobiaceae</taxon>
        <taxon>Chlorobium/Pelodictyon group</taxon>
        <taxon>Chlorobium</taxon>
    </lineage>
</organism>
<feature type="chain" id="PRO_1000114320" description="Protein RecA">
    <location>
        <begin position="1"/>
        <end position="350"/>
    </location>
</feature>
<feature type="binding site" evidence="1">
    <location>
        <begin position="80"/>
        <end position="87"/>
    </location>
    <ligand>
        <name>ATP</name>
        <dbReference type="ChEBI" id="CHEBI:30616"/>
    </ligand>
</feature>
<protein>
    <recommendedName>
        <fullName evidence="1">Protein RecA</fullName>
    </recommendedName>
    <alternativeName>
        <fullName evidence="1">Recombinase A</fullName>
    </alternativeName>
</protein>